<proteinExistence type="evidence at protein level"/>
<protein>
    <recommendedName>
        <fullName>Visual system homeobox 1</fullName>
    </recommendedName>
    <alternativeName>
        <fullName>Homeodomain protein RINX</fullName>
    </alternativeName>
    <alternativeName>
        <fullName>Retinal inner nuclear layer homeobox protein</fullName>
    </alternativeName>
    <alternativeName>
        <fullName>Transcription factor VSX1</fullName>
    </alternativeName>
</protein>
<comment type="function">
    <text evidence="1 7">Binds to the 37-bp core of the locus control region (LCR) of the red/green visual pigment gene cluster (PubMed:10903837). May regulate the activity of the LCR and the cone opsin genes at earlier stages of development (PubMed:10903837). Dispensable in early retinal development (By similarity).</text>
</comment>
<comment type="interaction">
    <interactant intactId="EBI-21789837">
        <id>Q9NZR4</id>
    </interactant>
    <interactant intactId="EBI-10988864">
        <id>P46379-2</id>
        <label>BAG6</label>
    </interactant>
    <organismsDiffer>false</organismsDiffer>
    <experiments>3</experiments>
</comment>
<comment type="subcellular location">
    <subcellularLocation>
        <location evidence="1">Nucleus</location>
    </subcellularLocation>
</comment>
<comment type="alternative products">
    <event type="alternative splicing"/>
    <isoform>
        <id>Q9NZR4-1</id>
        <name>1</name>
        <name>L1</name>
        <sequence type="displayed"/>
    </isoform>
    <isoform>
        <id>Q9NZR4-2</id>
        <name>2</name>
        <name>S1</name>
        <name>L3</name>
        <sequence type="described" ref="VSP_002302 VSP_002303"/>
    </isoform>
    <isoform>
        <id>Q9NZR4-3</id>
        <name>3</name>
        <name>S2</name>
        <sequence type="described" ref="VSP_002299 VSP_002302 VSP_002303"/>
    </isoform>
    <isoform>
        <id>Q9NZR4-4</id>
        <name>4</name>
        <name>S3</name>
        <sequence type="described" ref="VSP_002300 VSP_002301"/>
    </isoform>
    <isoform>
        <id>Q9NZR4-5</id>
        <name>5</name>
        <sequence type="described" ref="VSP_039144 VSP_039146"/>
    </isoform>
    <isoform>
        <id>Q9NZR4-6</id>
        <name>6</name>
        <sequence type="described" ref="VSP_039140 VSP_039142"/>
    </isoform>
    <isoform>
        <id>Q9NZR4-7</id>
        <name>7</name>
        <sequence type="described" ref="VSP_039141 VSP_039143"/>
    </isoform>
    <isoform>
        <id>Q9NZR4-8</id>
        <name>8</name>
        <sequence type="described" ref="VSP_039145 VSP_039147"/>
    </isoform>
    <text>Additional isoforms seem to exist.</text>
</comment>
<comment type="tissue specificity">
    <text evidence="6 7 8 12">In the adult eye, expressed in lens, iris, ciliary body, choroid, optical nerve head and, most strongly, in retina, but not expressed in sclera and cornea. According to PubMed:11978762, expressed in adult retina but not in lens and cornea. Within adult retina, found exclusively in the inner nuclear layer. Isoform 1, isoform 2, isoform 3 and isoform 4 expressed in adult retina, but not in brain, heart, kidney, liver, lung, pancreas, placenta and skeletal muscle. Not expressed in thymus and spleen. Expressed in embryonic craniofacial tissue. Expressed in fetal (week 14) retina. Strongly expressed in neonatal retina, weakly in neonatal lens, choroid and cornea (day 1, 4; month 9).</text>
</comment>
<comment type="disease" evidence="8 10 11 13 14 15">
    <disease id="DI-01861">
        <name>Keratoconus 1</name>
        <acronym>KTCN1</acronym>
        <description>Frequent corneal dystrophy with an incidence that varies from 50 to 230 per 100'000. The cornea assumes a conical shape as a result of a progressive non-inflammatory thinning of the corneal stroma. Keratoconus is most often an isolated sporadic condition with cases of autosomal dominant and autosomal recessive transmission.</description>
        <dbReference type="MIM" id="148300"/>
    </disease>
    <text>The disease is caused by variants affecting the gene represented in this entry.</text>
</comment>
<comment type="disease" evidence="9">
    <disease id="DI-03261">
        <name>Craniofacial anomalies and anterior segment dysgenesis syndrome</name>
        <acronym>CAASDS</acronym>
        <description>A disorder with extremely variable expressivity. Clinical features include wide interpupillary distance, abnormal corneal endothelium, unusual pinnae, partially to completely empty sella turcica, posterior fossa cyst, anterior encephalocele, and/or hydrocephalus.</description>
        <dbReference type="MIM" id="614195"/>
    </disease>
    <text>The disease is caused by variants affecting the gene represented in this entry.</text>
</comment>
<comment type="miscellaneous">
    <molecule>Isoform 1</molecule>
    <text>Major form.</text>
</comment>
<comment type="miscellaneous">
    <molecule>Isoform 2</molecule>
    <text evidence="18">Major form.</text>
</comment>
<comment type="miscellaneous">
    <molecule>Isoform 3</molecule>
    <text evidence="18">Minor form.</text>
</comment>
<comment type="miscellaneous">
    <molecule>Isoform 4</molecule>
    <text evidence="18">Minor form.</text>
</comment>
<comment type="similarity">
    <text evidence="18">Belongs to the paired homeobox family.</text>
</comment>
<evidence type="ECO:0000250" key="1">
    <source>
        <dbReference type="UniProtKB" id="Q91V10"/>
    </source>
</evidence>
<evidence type="ECO:0000255" key="2"/>
<evidence type="ECO:0000255" key="3">
    <source>
        <dbReference type="PROSITE-ProRule" id="PRU00108"/>
    </source>
</evidence>
<evidence type="ECO:0000255" key="4">
    <source>
        <dbReference type="PROSITE-ProRule" id="PRU00829"/>
    </source>
</evidence>
<evidence type="ECO:0000256" key="5">
    <source>
        <dbReference type="SAM" id="MobiDB-lite"/>
    </source>
</evidence>
<evidence type="ECO:0000269" key="6">
    <source>
    </source>
</evidence>
<evidence type="ECO:0000269" key="7">
    <source>
    </source>
</evidence>
<evidence type="ECO:0000269" key="8">
    <source>
    </source>
</evidence>
<evidence type="ECO:0000269" key="9">
    <source>
    </source>
</evidence>
<evidence type="ECO:0000269" key="10">
    <source>
    </source>
</evidence>
<evidence type="ECO:0000269" key="11">
    <source>
    </source>
</evidence>
<evidence type="ECO:0000269" key="12">
    <source>
    </source>
</evidence>
<evidence type="ECO:0000269" key="13">
    <source>
    </source>
</evidence>
<evidence type="ECO:0000269" key="14">
    <source>
    </source>
</evidence>
<evidence type="ECO:0000269" key="15">
    <source>
    </source>
</evidence>
<evidence type="ECO:0000303" key="16">
    <source>
    </source>
</evidence>
<evidence type="ECO:0000303" key="17">
    <source>
    </source>
</evidence>
<evidence type="ECO:0000305" key="18"/>
<sequence>MTGRDSLSDGRTSSRALVPGGSPRGSRPRGFAITDLLGLEAELPAPAGPGQGSGCEGPAVAPCPGPGLDGSSLARGALPLGLGLLCGFGTQPPAAARAPCLLLADVPFLPPRGPEPAAPLAPSRPPPALGRQKRSDSVSTSDEDSQSEDRNDLKASPTLGKRKKRRHRTVFTAHQLEELEKAFSEAHYPDVYAREMLAVKTELPEDRIQVWFQNRRAKWRKREKRWGGSSVMAEYGLYGAMVRHCIPLPDSVLNSAEGGLLGSCAPWLLGMHKKSMGMIRKPGSEDKLAGLWGSDHFKEGSSQSESGSQRGSDKVSPENGLEDVAIDLSSSARQETKKVHPGAGAQGGSNSTALEGPQPGKVGAT</sequence>
<reference key="1">
    <citation type="journal article" date="2000" name="Genomics">
        <title>Isolation and characterization of a novel human paired-like homeodomain-containing transcription factor gene, VSX1, expressed in ocular tissues.</title>
        <authorList>
            <person name="Semina E.V."/>
            <person name="Mintz-Hittner H.A."/>
            <person name="Murray J.C."/>
        </authorList>
    </citation>
    <scope>NUCLEOTIDE SEQUENCE [MRNA] (ISOFORM 1)</scope>
    <scope>TISSUE SPECIFICITY</scope>
    <source>
        <tissue>Craniofacial</tissue>
    </source>
</reference>
<reference key="2">
    <citation type="journal article" date="2000" name="Genomics">
        <title>RINX(VSX1), a novel homeobox gene expressed in the inner nuclear layer of the adult retina.</title>
        <authorList>
            <person name="Hayashi T."/>
            <person name="Huang J."/>
            <person name="Deeb S.S."/>
        </authorList>
    </citation>
    <scope>NUCLEOTIDE SEQUENCE [MRNA] (ISOFORMS 1; 2; 3 AND 4)</scope>
    <scope>FUNCTION</scope>
    <scope>TISSUE SPECIFICITY</scope>
    <source>
        <tissue>Retina</tissue>
    </source>
</reference>
<reference key="3">
    <citation type="journal article" date="2008" name="Mol. Vis.">
        <title>Genetic analysis of chromosome 20-related posterior polymorphous corneal dystrophy: genetic heterogeneity and exclusion of three candidate genes.</title>
        <authorList>
            <person name="Hosseini S.M."/>
            <person name="Herd S."/>
            <person name="Vincent A.L."/>
            <person name="Heon E."/>
        </authorList>
    </citation>
    <scope>NUCLEOTIDE SEQUENCE [MRNA] (ISOFORMS 1; 2; 5; 6; 7 AND 8)</scope>
    <scope>TISSUE SPECIFICITY</scope>
    <source>
        <tissue>Retina</tissue>
    </source>
</reference>
<reference key="4">
    <citation type="journal article" date="2001" name="Nature">
        <title>The DNA sequence and comparative analysis of human chromosome 20.</title>
        <authorList>
            <person name="Deloukas P."/>
            <person name="Matthews L.H."/>
            <person name="Ashurst J.L."/>
            <person name="Burton J."/>
            <person name="Gilbert J.G.R."/>
            <person name="Jones M."/>
            <person name="Stavrides G."/>
            <person name="Almeida J.P."/>
            <person name="Babbage A.K."/>
            <person name="Bagguley C.L."/>
            <person name="Bailey J."/>
            <person name="Barlow K.F."/>
            <person name="Bates K.N."/>
            <person name="Beard L.M."/>
            <person name="Beare D.M."/>
            <person name="Beasley O.P."/>
            <person name="Bird C.P."/>
            <person name="Blakey S.E."/>
            <person name="Bridgeman A.M."/>
            <person name="Brown A.J."/>
            <person name="Buck D."/>
            <person name="Burrill W.D."/>
            <person name="Butler A.P."/>
            <person name="Carder C."/>
            <person name="Carter N.P."/>
            <person name="Chapman J.C."/>
            <person name="Clamp M."/>
            <person name="Clark G."/>
            <person name="Clark L.N."/>
            <person name="Clark S.Y."/>
            <person name="Clee C.M."/>
            <person name="Clegg S."/>
            <person name="Cobley V.E."/>
            <person name="Collier R.E."/>
            <person name="Connor R.E."/>
            <person name="Corby N.R."/>
            <person name="Coulson A."/>
            <person name="Coville G.J."/>
            <person name="Deadman R."/>
            <person name="Dhami P.D."/>
            <person name="Dunn M."/>
            <person name="Ellington A.G."/>
            <person name="Frankland J.A."/>
            <person name="Fraser A."/>
            <person name="French L."/>
            <person name="Garner P."/>
            <person name="Grafham D.V."/>
            <person name="Griffiths C."/>
            <person name="Griffiths M.N.D."/>
            <person name="Gwilliam R."/>
            <person name="Hall R.E."/>
            <person name="Hammond S."/>
            <person name="Harley J.L."/>
            <person name="Heath P.D."/>
            <person name="Ho S."/>
            <person name="Holden J.L."/>
            <person name="Howden P.J."/>
            <person name="Huckle E."/>
            <person name="Hunt A.R."/>
            <person name="Hunt S.E."/>
            <person name="Jekosch K."/>
            <person name="Johnson C.M."/>
            <person name="Johnson D."/>
            <person name="Kay M.P."/>
            <person name="Kimberley A.M."/>
            <person name="King A."/>
            <person name="Knights A."/>
            <person name="Laird G.K."/>
            <person name="Lawlor S."/>
            <person name="Lehvaeslaiho M.H."/>
            <person name="Leversha M.A."/>
            <person name="Lloyd C."/>
            <person name="Lloyd D.M."/>
            <person name="Lovell J.D."/>
            <person name="Marsh V.L."/>
            <person name="Martin S.L."/>
            <person name="McConnachie L.J."/>
            <person name="McLay K."/>
            <person name="McMurray A.A."/>
            <person name="Milne S.A."/>
            <person name="Mistry D."/>
            <person name="Moore M.J.F."/>
            <person name="Mullikin J.C."/>
            <person name="Nickerson T."/>
            <person name="Oliver K."/>
            <person name="Parker A."/>
            <person name="Patel R."/>
            <person name="Pearce T.A.V."/>
            <person name="Peck A.I."/>
            <person name="Phillimore B.J.C.T."/>
            <person name="Prathalingam S.R."/>
            <person name="Plumb R.W."/>
            <person name="Ramsay H."/>
            <person name="Rice C.M."/>
            <person name="Ross M.T."/>
            <person name="Scott C.E."/>
            <person name="Sehra H.K."/>
            <person name="Shownkeen R."/>
            <person name="Sims S."/>
            <person name="Skuce C.D."/>
            <person name="Smith M.L."/>
            <person name="Soderlund C."/>
            <person name="Steward C.A."/>
            <person name="Sulston J.E."/>
            <person name="Swann R.M."/>
            <person name="Sycamore N."/>
            <person name="Taylor R."/>
            <person name="Tee L."/>
            <person name="Thomas D.W."/>
            <person name="Thorpe A."/>
            <person name="Tracey A."/>
            <person name="Tromans A.C."/>
            <person name="Vaudin M."/>
            <person name="Wall M."/>
            <person name="Wallis J.M."/>
            <person name="Whitehead S.L."/>
            <person name="Whittaker P."/>
            <person name="Willey D.L."/>
            <person name="Williams L."/>
            <person name="Williams S.A."/>
            <person name="Wilming L."/>
            <person name="Wray P.W."/>
            <person name="Hubbard T."/>
            <person name="Durbin R.M."/>
            <person name="Bentley D.R."/>
            <person name="Beck S."/>
            <person name="Rogers J."/>
        </authorList>
    </citation>
    <scope>NUCLEOTIDE SEQUENCE [LARGE SCALE GENOMIC DNA]</scope>
</reference>
<reference key="5">
    <citation type="journal article" date="2004" name="Genome Res.">
        <title>The status, quality, and expansion of the NIH full-length cDNA project: the Mammalian Gene Collection (MGC).</title>
        <authorList>
            <consortium name="The MGC Project Team"/>
        </authorList>
    </citation>
    <scope>NUCLEOTIDE SEQUENCE [LARGE SCALE MRNA] (ISOFORM 1)</scope>
</reference>
<reference key="6">
    <citation type="journal article" date="2009" name="Mol. Vis.">
        <title>A novel VSX1 mutation identified in an individual with keratoconus in India.</title>
        <authorList>
            <person name="Paliwal P."/>
            <person name="Singh A."/>
            <person name="Tandon R."/>
            <person name="Titiyal J.S."/>
            <person name="Sharma A."/>
        </authorList>
    </citation>
    <scope>NUCLEOTIDE SEQUENCE [GENOMIC DNA] OF 168-186 (ISOFORMS 1/2/3/5/6/7/8)</scope>
    <scope>VARIANT KTCN1 HIS-175</scope>
</reference>
<reference key="7">
    <citation type="journal article" date="2002" name="Hum. Mol. Genet.">
        <title>VSX1: a gene for posterior polymorphous dystrophy and keratoconus.</title>
        <authorList>
            <person name="Heon E."/>
            <person name="Greenberg A."/>
            <person name="Kopp K.K."/>
            <person name="Rootman D."/>
            <person name="Vincent A.L."/>
            <person name="Billingsley G."/>
            <person name="Priston M."/>
            <person name="Dorval K.M."/>
            <person name="Chow R.L."/>
            <person name="McInnes R.R."/>
            <person name="Heathcote G."/>
            <person name="Westall C."/>
            <person name="Sutphin J.E."/>
            <person name="Semina E."/>
            <person name="Bremner R."/>
            <person name="Stone E.M."/>
        </authorList>
    </citation>
    <scope>TISSUE SPECIFICITY</scope>
    <scope>VARIANTS KTCN1 MET-159; ASP-160; TRP-166; ARG-244 AND ARG-247</scope>
    <scope>VARIANT GLU-144</scope>
</reference>
<reference key="8">
    <citation type="journal article" date="2004" name="Ophthalmology">
        <title>VSX1 (RINX) mutation with craniofacial anomalies, empty sella, corneal endothelial changes, and abnormal retinal and auditory bipolar cells.</title>
        <authorList>
            <person name="Mintz-Hittner H.A."/>
            <person name="Semina E.V."/>
            <person name="Frishman L.J."/>
            <person name="Prager T.C."/>
            <person name="Murray J.C."/>
        </authorList>
    </citation>
    <scope>VARIANT CAASDS SER-256</scope>
    <scope>VARIANT SER-131</scope>
</reference>
<reference key="9">
    <citation type="journal article" date="2005" name="Invest. Ophthalmol. Vis. Sci.">
        <title>VSX1 mutational analysis in a series of Italian patients affected by keratoconus: detection of a novel mutation.</title>
        <authorList>
            <person name="Bisceglia L."/>
            <person name="Ciaschetti M."/>
            <person name="De Bonis P."/>
            <person name="Campo P.A."/>
            <person name="Pizzicoli C."/>
            <person name="Scala C."/>
            <person name="Grifa M."/>
            <person name="Ciavarella P."/>
            <person name="Delle Noci N."/>
            <person name="Vaira F."/>
            <person name="Macaluso C."/>
            <person name="Zelante L."/>
        </authorList>
    </citation>
    <scope>VARIANTS KTCN1 PRO-17; ASP-160 AND ARG-247</scope>
    <scope>VARIANT GLU-144</scope>
</reference>
<reference key="10">
    <citation type="journal article" date="2008" name="Cornea">
        <title>Three VSX1 gene mutations, L159M, R166W, and H244R, are not associated with keratoconus.</title>
        <authorList>
            <person name="Tang Y.G."/>
            <person name="Picornell Y."/>
            <person name="Su X."/>
            <person name="Li X."/>
            <person name="Yang H."/>
            <person name="Rabinowitz Y.S."/>
        </authorList>
    </citation>
    <scope>VARIANT KTCN1 MET-159</scope>
    <scope>VARIANT ARG-244</scope>
</reference>
<reference key="11">
    <citation type="journal article" date="2010" name="Eye">
        <title>Mutational screening of VSX1 in keratoconus patients from the European population.</title>
        <authorList>
            <person name="Dash D.P."/>
            <person name="George S."/>
            <person name="O'Prey D."/>
            <person name="Burns D."/>
            <person name="Nabili S."/>
            <person name="Donnelly U."/>
            <person name="Hughes A.E."/>
            <person name="Silvestri G."/>
            <person name="Jackson J."/>
            <person name="Frazer D."/>
            <person name="Heon E."/>
            <person name="Willoughby C.E."/>
        </authorList>
    </citation>
    <scope>VARIANT GLU-144</scope>
    <scope>VARIANT KTCN1 ASP-160</scope>
</reference>
<reference key="12">
    <citation type="journal article" date="2011" name="Mol. Vis.">
        <title>Mutational screening of VSX1, SPARC, SOD1, LOX, and TIMP3 in keratoconus.</title>
        <authorList>
            <person name="De Bonis P."/>
            <person name="Laborante A."/>
            <person name="Pizzicoli C."/>
            <person name="Stallone R."/>
            <person name="Barbano R."/>
            <person name="Longo C."/>
            <person name="Mazzilli E."/>
            <person name="Zelante L."/>
            <person name="Bisceglia L."/>
        </authorList>
    </citation>
    <scope>VARIANTS KTCN1 PRO-17; ASP-160; ARG-239 AND ARG-247</scope>
    <scope>VARIANT GLU-144</scope>
</reference>
<keyword id="KW-0025">Alternative splicing</keyword>
<keyword id="KW-1212">Corneal dystrophy</keyword>
<keyword id="KW-0217">Developmental protein</keyword>
<keyword id="KW-0225">Disease variant</keyword>
<keyword id="KW-0238">DNA-binding</keyword>
<keyword id="KW-0371">Homeobox</keyword>
<keyword id="KW-0539">Nucleus</keyword>
<keyword id="KW-1185">Reference proteome</keyword>
<keyword id="KW-0716">Sensory transduction</keyword>
<keyword id="KW-0804">Transcription</keyword>
<keyword id="KW-0805">Transcription regulation</keyword>
<keyword id="KW-0844">Vision</keyword>
<dbReference type="EMBL" id="AF176797">
    <property type="protein sequence ID" value="AAF37425.2"/>
    <property type="molecule type" value="mRNA"/>
</dbReference>
<dbReference type="EMBL" id="AF251033">
    <property type="protein sequence ID" value="AAF99656.1"/>
    <property type="molecule type" value="mRNA"/>
</dbReference>
<dbReference type="EMBL" id="AF251034">
    <property type="protein sequence ID" value="AAF99657.1"/>
    <property type="molecule type" value="mRNA"/>
</dbReference>
<dbReference type="EMBL" id="DQ854807">
    <property type="protein sequence ID" value="ABI23973.1"/>
    <property type="molecule type" value="mRNA"/>
</dbReference>
<dbReference type="EMBL" id="DQ854808">
    <property type="protein sequence ID" value="ABI23974.1"/>
    <property type="molecule type" value="mRNA"/>
</dbReference>
<dbReference type="EMBL" id="DQ854809">
    <property type="protein sequence ID" value="ABI23975.1"/>
    <property type="molecule type" value="mRNA"/>
</dbReference>
<dbReference type="EMBL" id="DQ854810">
    <property type="protein sequence ID" value="ABI23976.1"/>
    <property type="molecule type" value="mRNA"/>
</dbReference>
<dbReference type="EMBL" id="DQ854811">
    <property type="protein sequence ID" value="ABI23977.1"/>
    <property type="molecule type" value="mRNA"/>
</dbReference>
<dbReference type="EMBL" id="DQ854812">
    <property type="protein sequence ID" value="ABI23978.1"/>
    <property type="molecule type" value="mRNA"/>
</dbReference>
<dbReference type="EMBL" id="AL080312">
    <property type="status" value="NOT_ANNOTATED_CDS"/>
    <property type="molecule type" value="Genomic_DNA"/>
</dbReference>
<dbReference type="EMBL" id="BC126228">
    <property type="protein sequence ID" value="AAI26229.1"/>
    <property type="molecule type" value="mRNA"/>
</dbReference>
<dbReference type="EMBL" id="BC136497">
    <property type="protein sequence ID" value="AAI36498.1"/>
    <property type="molecule type" value="mRNA"/>
</dbReference>
<dbReference type="EMBL" id="GU138372">
    <property type="protein sequence ID" value="ACZ01961.1"/>
    <property type="molecule type" value="Genomic_DNA"/>
</dbReference>
<dbReference type="CCDS" id="CCDS13168.1">
    <molecule id="Q9NZR4-1"/>
</dbReference>
<dbReference type="CCDS" id="CCDS13169.1">
    <molecule id="Q9NZR4-2"/>
</dbReference>
<dbReference type="CCDS" id="CCDS58766.1">
    <molecule id="Q9NZR4-7"/>
</dbReference>
<dbReference type="CCDS" id="CCDS58767.1">
    <molecule id="Q9NZR4-8"/>
</dbReference>
<dbReference type="RefSeq" id="NP_001243200.1">
    <molecule id="Q9NZR4-7"/>
    <property type="nucleotide sequence ID" value="NM_001256271.2"/>
</dbReference>
<dbReference type="RefSeq" id="NP_001243201.1">
    <molecule id="Q9NZR4-8"/>
    <property type="nucleotide sequence ID" value="NM_001256272.2"/>
</dbReference>
<dbReference type="RefSeq" id="NP_055403.2">
    <molecule id="Q9NZR4-1"/>
    <property type="nucleotide sequence ID" value="NM_014588.5"/>
</dbReference>
<dbReference type="RefSeq" id="NP_955457.1">
    <molecule id="Q9NZR4-2"/>
    <property type="nucleotide sequence ID" value="NM_199425.3"/>
</dbReference>
<dbReference type="RefSeq" id="XP_016883326.1">
    <molecule id="Q9NZR4-5"/>
    <property type="nucleotide sequence ID" value="XM_017027837.2"/>
</dbReference>
<dbReference type="RefSeq" id="XP_016883327.1">
    <molecule id="Q9NZR4-6"/>
    <property type="nucleotide sequence ID" value="XM_017027838.2"/>
</dbReference>
<dbReference type="RefSeq" id="XP_054179376.1">
    <molecule id="Q9NZR4-8"/>
    <property type="nucleotide sequence ID" value="XM_054323401.1"/>
</dbReference>
<dbReference type="SMR" id="Q9NZR4"/>
<dbReference type="BioGRID" id="119037">
    <property type="interactions" value="68"/>
</dbReference>
<dbReference type="FunCoup" id="Q9NZR4">
    <property type="interactions" value="549"/>
</dbReference>
<dbReference type="IntAct" id="Q9NZR4">
    <property type="interactions" value="61"/>
</dbReference>
<dbReference type="STRING" id="9606.ENSP00000365899"/>
<dbReference type="GlyGen" id="Q9NZR4">
    <property type="glycosylation" value="1 site, 1 O-linked glycan (1 site)"/>
</dbReference>
<dbReference type="iPTMnet" id="Q9NZR4"/>
<dbReference type="PhosphoSitePlus" id="Q9NZR4"/>
<dbReference type="BioMuta" id="VSX1"/>
<dbReference type="DMDM" id="25009572"/>
<dbReference type="jPOST" id="Q9NZR4"/>
<dbReference type="MassIVE" id="Q9NZR4"/>
<dbReference type="PaxDb" id="9606-ENSP00000365899"/>
<dbReference type="PeptideAtlas" id="Q9NZR4"/>
<dbReference type="ProteomicsDB" id="83493">
    <molecule id="Q9NZR4-1"/>
</dbReference>
<dbReference type="ProteomicsDB" id="83494">
    <molecule id="Q9NZR4-2"/>
</dbReference>
<dbReference type="ProteomicsDB" id="83495">
    <molecule id="Q9NZR4-3"/>
</dbReference>
<dbReference type="ProteomicsDB" id="83496">
    <molecule id="Q9NZR4-4"/>
</dbReference>
<dbReference type="ProteomicsDB" id="83497">
    <molecule id="Q9NZR4-5"/>
</dbReference>
<dbReference type="ProteomicsDB" id="83498">
    <molecule id="Q9NZR4-6"/>
</dbReference>
<dbReference type="ProteomicsDB" id="83499">
    <molecule id="Q9NZR4-7"/>
</dbReference>
<dbReference type="ProteomicsDB" id="83500">
    <molecule id="Q9NZR4-8"/>
</dbReference>
<dbReference type="Antibodypedia" id="9932">
    <property type="antibodies" value="158 antibodies from 24 providers"/>
</dbReference>
<dbReference type="DNASU" id="30813"/>
<dbReference type="Ensembl" id="ENST00000376707.4">
    <molecule id="Q9NZR4-2"/>
    <property type="protein sequence ID" value="ENSP00000365897.3"/>
    <property type="gene ID" value="ENSG00000100987.15"/>
</dbReference>
<dbReference type="Ensembl" id="ENST00000376709.9">
    <molecule id="Q9NZR4-1"/>
    <property type="protein sequence ID" value="ENSP00000365899.3"/>
    <property type="gene ID" value="ENSG00000100987.15"/>
</dbReference>
<dbReference type="Ensembl" id="ENST00000409285.6">
    <molecule id="Q9NZR4-5"/>
    <property type="protein sequence ID" value="ENSP00000386612.2"/>
    <property type="gene ID" value="ENSG00000100987.15"/>
</dbReference>
<dbReference type="Ensembl" id="ENST00000409958.6">
    <molecule id="Q9NZR4-6"/>
    <property type="protein sequence ID" value="ENSP00000387069.2"/>
    <property type="gene ID" value="ENSG00000100987.15"/>
</dbReference>
<dbReference type="Ensembl" id="ENST00000429762.7">
    <molecule id="Q9NZR4-8"/>
    <property type="protein sequence ID" value="ENSP00000401690.3"/>
    <property type="gene ID" value="ENSG00000100987.15"/>
</dbReference>
<dbReference type="Ensembl" id="ENST00000444511.6">
    <molecule id="Q9NZR4-7"/>
    <property type="protein sequence ID" value="ENSP00000387720.2"/>
    <property type="gene ID" value="ENSG00000100987.15"/>
</dbReference>
<dbReference type="GeneID" id="30813"/>
<dbReference type="KEGG" id="hsa:30813"/>
<dbReference type="MANE-Select" id="ENST00000376709.9">
    <property type="protein sequence ID" value="ENSP00000365899.3"/>
    <property type="RefSeq nucleotide sequence ID" value="NM_014588.6"/>
    <property type="RefSeq protein sequence ID" value="NP_055403.2"/>
</dbReference>
<dbReference type="UCSC" id="uc002wuf.5">
    <molecule id="Q9NZR4-1"/>
    <property type="organism name" value="human"/>
</dbReference>
<dbReference type="AGR" id="HGNC:12723"/>
<dbReference type="CTD" id="30813"/>
<dbReference type="DisGeNET" id="30813"/>
<dbReference type="GeneCards" id="VSX1"/>
<dbReference type="HGNC" id="HGNC:12723">
    <property type="gene designation" value="VSX1"/>
</dbReference>
<dbReference type="HPA" id="ENSG00000100987">
    <property type="expression patterns" value="Group enriched (brain, retina)"/>
</dbReference>
<dbReference type="MalaCards" id="VSX1"/>
<dbReference type="MIM" id="148300">
    <property type="type" value="phenotype"/>
</dbReference>
<dbReference type="MIM" id="605020">
    <property type="type" value="gene"/>
</dbReference>
<dbReference type="MIM" id="614195">
    <property type="type" value="phenotype"/>
</dbReference>
<dbReference type="neXtProt" id="NX_Q9NZR4"/>
<dbReference type="OpenTargets" id="ENSG00000100987"/>
<dbReference type="Orphanet" id="98973">
    <property type="disease" value="Posterior polymorphous corneal dystrophy"/>
</dbReference>
<dbReference type="PharmGKB" id="PA37334"/>
<dbReference type="VEuPathDB" id="HostDB:ENSG00000100987"/>
<dbReference type="eggNOG" id="KOG0494">
    <property type="taxonomic scope" value="Eukaryota"/>
</dbReference>
<dbReference type="GeneTree" id="ENSGT00940000160793"/>
<dbReference type="HOGENOM" id="CLU_049243_1_1_1"/>
<dbReference type="InParanoid" id="Q9NZR4"/>
<dbReference type="OMA" id="WGSDHLK"/>
<dbReference type="OrthoDB" id="6159439at2759"/>
<dbReference type="PAN-GO" id="Q9NZR4">
    <property type="GO annotations" value="4 GO annotations based on evolutionary models"/>
</dbReference>
<dbReference type="PhylomeDB" id="Q9NZR4"/>
<dbReference type="TreeFam" id="TF350743"/>
<dbReference type="PathwayCommons" id="Q9NZR4"/>
<dbReference type="SignaLink" id="Q9NZR4"/>
<dbReference type="BioGRID-ORCS" id="30813">
    <property type="hits" value="12 hits in 1169 CRISPR screens"/>
</dbReference>
<dbReference type="GeneWiki" id="VSX1"/>
<dbReference type="GenomeRNAi" id="30813"/>
<dbReference type="Pharos" id="Q9NZR4">
    <property type="development level" value="Tbio"/>
</dbReference>
<dbReference type="PRO" id="PR:Q9NZR4"/>
<dbReference type="Proteomes" id="UP000005640">
    <property type="component" value="Chromosome 20"/>
</dbReference>
<dbReference type="RNAct" id="Q9NZR4">
    <property type="molecule type" value="protein"/>
</dbReference>
<dbReference type="Bgee" id="ENSG00000100987">
    <property type="expression patterns" value="Expressed in cerebellar hemisphere and 81 other cell types or tissues"/>
</dbReference>
<dbReference type="GO" id="GO:0000785">
    <property type="term" value="C:chromatin"/>
    <property type="evidence" value="ECO:0000247"/>
    <property type="project" value="NTNU_SB"/>
</dbReference>
<dbReference type="GO" id="GO:0005634">
    <property type="term" value="C:nucleus"/>
    <property type="evidence" value="ECO:0000318"/>
    <property type="project" value="GO_Central"/>
</dbReference>
<dbReference type="GO" id="GO:0003700">
    <property type="term" value="F:DNA-binding transcription factor activity"/>
    <property type="evidence" value="ECO:0000303"/>
    <property type="project" value="ProtInc"/>
</dbReference>
<dbReference type="GO" id="GO:0000981">
    <property type="term" value="F:DNA-binding transcription factor activity, RNA polymerase II-specific"/>
    <property type="evidence" value="ECO:0000247"/>
    <property type="project" value="NTNU_SB"/>
</dbReference>
<dbReference type="GO" id="GO:1990837">
    <property type="term" value="F:sequence-specific double-stranded DNA binding"/>
    <property type="evidence" value="ECO:0000314"/>
    <property type="project" value="ARUK-UCL"/>
</dbReference>
<dbReference type="GO" id="GO:0000976">
    <property type="term" value="F:transcription cis-regulatory region binding"/>
    <property type="evidence" value="ECO:0000318"/>
    <property type="project" value="GO_Central"/>
</dbReference>
<dbReference type="GO" id="GO:0048666">
    <property type="term" value="P:neuron development"/>
    <property type="evidence" value="ECO:0000318"/>
    <property type="project" value="GO_Central"/>
</dbReference>
<dbReference type="GO" id="GO:0042551">
    <property type="term" value="P:neuron maturation"/>
    <property type="evidence" value="ECO:0007669"/>
    <property type="project" value="Ensembl"/>
</dbReference>
<dbReference type="GO" id="GO:0006355">
    <property type="term" value="P:regulation of DNA-templated transcription"/>
    <property type="evidence" value="ECO:0000318"/>
    <property type="project" value="GO_Central"/>
</dbReference>
<dbReference type="GO" id="GO:0060040">
    <property type="term" value="P:retinal bipolar neuron differentiation"/>
    <property type="evidence" value="ECO:0007669"/>
    <property type="project" value="Ensembl"/>
</dbReference>
<dbReference type="GO" id="GO:0007601">
    <property type="term" value="P:visual perception"/>
    <property type="evidence" value="ECO:0000304"/>
    <property type="project" value="ProtInc"/>
</dbReference>
<dbReference type="CDD" id="cd00086">
    <property type="entry name" value="homeodomain"/>
    <property type="match status" value="1"/>
</dbReference>
<dbReference type="FunFam" id="1.10.10.60:FF:000065">
    <property type="entry name" value="Visual system homeobox 1"/>
    <property type="match status" value="1"/>
</dbReference>
<dbReference type="Gene3D" id="1.10.10.60">
    <property type="entry name" value="Homeodomain-like"/>
    <property type="match status" value="1"/>
</dbReference>
<dbReference type="InterPro" id="IPR023339">
    <property type="entry name" value="CVC"/>
</dbReference>
<dbReference type="InterPro" id="IPR001356">
    <property type="entry name" value="HD"/>
</dbReference>
<dbReference type="InterPro" id="IPR017970">
    <property type="entry name" value="Homeobox_CS"/>
</dbReference>
<dbReference type="InterPro" id="IPR051775">
    <property type="entry name" value="Homeobox_domain"/>
</dbReference>
<dbReference type="InterPro" id="IPR009057">
    <property type="entry name" value="Homeodomain-like_sf"/>
</dbReference>
<dbReference type="PANTHER" id="PTHR24323">
    <property type="entry name" value="CEH-10 HOMEODOMAIN-CONTAINING HOMOLOG"/>
    <property type="match status" value="1"/>
</dbReference>
<dbReference type="PANTHER" id="PTHR24323:SF3">
    <property type="entry name" value="VISUAL SYSTEM HOMEOBOX 1"/>
    <property type="match status" value="1"/>
</dbReference>
<dbReference type="Pfam" id="PF00046">
    <property type="entry name" value="Homeodomain"/>
    <property type="match status" value="1"/>
</dbReference>
<dbReference type="SMART" id="SM00389">
    <property type="entry name" value="HOX"/>
    <property type="match status" value="1"/>
</dbReference>
<dbReference type="SUPFAM" id="SSF46689">
    <property type="entry name" value="Homeodomain-like"/>
    <property type="match status" value="1"/>
</dbReference>
<dbReference type="PROSITE" id="PS51496">
    <property type="entry name" value="CVC"/>
    <property type="match status" value="1"/>
</dbReference>
<dbReference type="PROSITE" id="PS00027">
    <property type="entry name" value="HOMEOBOX_1"/>
    <property type="match status" value="1"/>
</dbReference>
<dbReference type="PROSITE" id="PS50071">
    <property type="entry name" value="HOMEOBOX_2"/>
    <property type="match status" value="1"/>
</dbReference>
<accession>Q9NZR4</accession>
<accession>B9EGJ4</accession>
<accession>D1MF28</accession>
<accession>Q0GM60</accession>
<accession>Q0GM61</accession>
<accession>Q0GM62</accession>
<accession>Q0GM63</accession>
<accession>Q0GM64</accession>
<accession>Q0GM65</accession>
<accession>Q5TF40</accession>
<accession>Q5TF41</accession>
<accession>Q9HCU3</accession>
<accession>Q9NU27</accession>
<gene>
    <name type="primary">VSX1</name>
    <name type="synonym">RINX</name>
</gene>
<feature type="chain" id="PRO_0000049355" description="Visual system homeobox 1">
    <location>
        <begin position="1"/>
        <end position="365"/>
    </location>
</feature>
<feature type="domain" description="CVC" evidence="4">
    <location>
        <begin position="224"/>
        <end position="277"/>
    </location>
</feature>
<feature type="DNA-binding region" description="Homeobox" evidence="3">
    <location>
        <begin position="164"/>
        <end position="223"/>
    </location>
</feature>
<feature type="region of interest" description="Disordered" evidence="5">
    <location>
        <begin position="1"/>
        <end position="37"/>
    </location>
</feature>
<feature type="region of interest" description="Disordered" evidence="5">
    <location>
        <begin position="113"/>
        <end position="167"/>
    </location>
</feature>
<feature type="region of interest" description="Disordered" evidence="5">
    <location>
        <begin position="290"/>
        <end position="365"/>
    </location>
</feature>
<feature type="short sequence motif" description="Octapeptide motif">
    <location>
        <begin position="31"/>
        <end position="38"/>
    </location>
</feature>
<feature type="short sequence motif" description="Nuclear localization signal" evidence="2">
    <location>
        <begin position="161"/>
        <end position="166"/>
    </location>
</feature>
<feature type="compositionally biased region" description="Low complexity" evidence="5">
    <location>
        <begin position="19"/>
        <end position="37"/>
    </location>
</feature>
<feature type="compositionally biased region" description="Pro residues" evidence="5">
    <location>
        <begin position="113"/>
        <end position="128"/>
    </location>
</feature>
<feature type="compositionally biased region" description="Low complexity" evidence="5">
    <location>
        <begin position="300"/>
        <end position="310"/>
    </location>
</feature>
<feature type="splice variant" id="VSP_002299" description="In isoform 3." evidence="16">
    <original>S</original>
    <variation>SGNQARAFRSCPCPLGSEPRRGHRPSPHRTPGPSGPDLGGEPRARPRRGRGIRGAAPPAPCCILNPCLSSGVLFPQRCETATTWFRVEPFDETLGSSTTISRGPFFPPAPGASLRLWQLRGSGRPGPVVVTSSTEQ</variation>
    <location>
        <position position="141"/>
    </location>
</feature>
<feature type="splice variant" id="VSP_002300" description="In isoform 4." evidence="16">
    <original>DE</original>
    <variation>AM</variation>
    <location>
        <begin position="142"/>
        <end position="143"/>
    </location>
</feature>
<feature type="splice variant" id="VSP_002301" description="In isoform 4." evidence="16">
    <location>
        <begin position="144"/>
        <end position="365"/>
    </location>
</feature>
<feature type="splice variant" id="VSP_039141" description="In isoform 7." evidence="17">
    <original>VWFQNRRAKWRKREKRWGGSSVMAEYG</original>
    <variation>CKLLLLEAPVHWTLQETHRLPRPRGGA</variation>
    <location>
        <begin position="210"/>
        <end position="236"/>
    </location>
</feature>
<feature type="splice variant" id="VSP_039140" description="In isoform 6." evidence="17">
    <original>VWFQNRRAK</original>
    <variation>RVRHWAAEK</variation>
    <location>
        <begin position="210"/>
        <end position="218"/>
    </location>
</feature>
<feature type="splice variant" id="VSP_002302" description="In isoform 2 and isoform 3." evidence="16 17">
    <original>WFQNRRAKWRKREKRWGGSSVMAEYGLYG</original>
    <variation>SGVPFLRSKDTTENVSFPHSVSQSAVPSL</variation>
    <location>
        <begin position="211"/>
        <end position="239"/>
    </location>
</feature>
<feature type="splice variant" id="VSP_039142" description="In isoform 6." evidence="17">
    <location>
        <begin position="219"/>
        <end position="365"/>
    </location>
</feature>
<feature type="splice variant" id="VSP_039143" description="In isoform 7." evidence="17">
    <location>
        <begin position="237"/>
        <end position="365"/>
    </location>
</feature>
<feature type="splice variant" id="VSP_002303" description="In isoform 2 and isoform 3." evidence="16 17">
    <location>
        <begin position="240"/>
        <end position="365"/>
    </location>
</feature>
<feature type="splice variant" id="VSP_039145" description="In isoform 8." evidence="17">
    <original>GMHKKSMGMIRKPGSEDKLAGLWGSDHFKEGS</original>
    <variation>VQTSAPGGSRSLDFAGDTQAPQTPWWCLMTFS</variation>
    <location>
        <begin position="270"/>
        <end position="301"/>
    </location>
</feature>
<feature type="splice variant" id="VSP_039144" description="In isoform 5." evidence="17">
    <original>GMHKKSMGMIR</original>
    <variation>EGETLGCREMK</variation>
    <location>
        <begin position="270"/>
        <end position="280"/>
    </location>
</feature>
<feature type="splice variant" id="VSP_039146" description="In isoform 5." evidence="17">
    <location>
        <begin position="281"/>
        <end position="365"/>
    </location>
</feature>
<feature type="splice variant" id="VSP_039147" description="In isoform 8." evidence="17">
    <location>
        <begin position="302"/>
        <end position="365"/>
    </location>
</feature>
<feature type="sequence variant" id="VAR_066670" description="In KTCN1; dbSNP:rs74315436." evidence="10 15">
    <original>L</original>
    <variation>P</variation>
    <location>
        <position position="17"/>
    </location>
</feature>
<feature type="sequence variant" id="VAR_066671" description="In dbSNP:rs6050307." evidence="9">
    <original>R</original>
    <variation>S</variation>
    <location>
        <position position="131"/>
    </location>
</feature>
<feature type="sequence variant" id="VAR_014243" description="In dbSNP:rs140122268." evidence="8 10 13 15">
    <original>D</original>
    <variation>E</variation>
    <location>
        <position position="144"/>
    </location>
</feature>
<feature type="sequence variant" id="VAR_014244" description="In KTCN1; uncertain significance; dbSNP:rs74315434." evidence="8 11">
    <original>L</original>
    <variation>M</variation>
    <location>
        <position position="159"/>
    </location>
</feature>
<feature type="sequence variant" id="VAR_014245" description="In KTCN1; uncertain significance; dbSNP:rs74315433." evidence="8 10 13 15">
    <original>G</original>
    <variation>D</variation>
    <location>
        <position position="160"/>
    </location>
</feature>
<feature type="sequence variant" id="VAR_014246" description="In KTCN1; sporadic; dbSNP:rs74315432." evidence="8">
    <original>R</original>
    <variation>W</variation>
    <location>
        <position position="166"/>
    </location>
</feature>
<feature type="sequence variant" id="VAR_063100" description="In KTCN1; dbSNP:rs771561481." evidence="14">
    <original>Q</original>
    <variation>H</variation>
    <location>
        <position position="175"/>
    </location>
</feature>
<feature type="sequence variant" id="VAR_076692" description="In KTCN1; uncertain significance; dbSNP:rs749663315." evidence="15">
    <original>G</original>
    <variation>R</variation>
    <location>
        <position position="239"/>
    </location>
</feature>
<feature type="sequence variant" id="VAR_014247" description="In KTCN1; uncertain significance; dbSNP:rs148957473." evidence="8 11">
    <original>H</original>
    <variation>R</variation>
    <location>
        <position position="244"/>
    </location>
</feature>
<feature type="sequence variant" id="VAR_014248" description="In KTCN1; uncertain significance; also in a patient with retinal dysfunction; dbSNP:rs576300014." evidence="8 10 15">
    <original>P</original>
    <variation>R</variation>
    <location>
        <position position="247"/>
    </location>
</feature>
<feature type="sequence variant" id="VAR_066672" description="In CAASDS; dbSNP:rs74315435." evidence="9">
    <original>A</original>
    <variation>S</variation>
    <location>
        <position position="256"/>
    </location>
</feature>
<name>VSX1_HUMAN</name>
<organism>
    <name type="scientific">Homo sapiens</name>
    <name type="common">Human</name>
    <dbReference type="NCBI Taxonomy" id="9606"/>
    <lineage>
        <taxon>Eukaryota</taxon>
        <taxon>Metazoa</taxon>
        <taxon>Chordata</taxon>
        <taxon>Craniata</taxon>
        <taxon>Vertebrata</taxon>
        <taxon>Euteleostomi</taxon>
        <taxon>Mammalia</taxon>
        <taxon>Eutheria</taxon>
        <taxon>Euarchontoglires</taxon>
        <taxon>Primates</taxon>
        <taxon>Haplorrhini</taxon>
        <taxon>Catarrhini</taxon>
        <taxon>Hominidae</taxon>
        <taxon>Homo</taxon>
    </lineage>
</organism>